<evidence type="ECO:0000250" key="1"/>
<evidence type="ECO:0000305" key="2"/>
<sequence>MRVVVVTLALLFLTGTQARYFWQHDEPQAPLDRLRDLVDVYLETVKASGKDAIAQFEASAVGKQLDLKLADNLDTLGAAAAKLREDMAPYYKEVREMWLKDTESLRAELTKDLEEVKEKIRPFLDQFSAKWTEELEQYRQRLAPVAEELKELTKQKVELMQQKLTPVAEEARDRLRGHVEELRKNLAPYSDELRQKLSQKLEEIREKGIPQAAEYQAKVVEQLSNLREKMTPLVQDFKERLTPYAENLKTRFISLLDELQKTVA</sequence>
<gene>
    <name type="primary">APOA1</name>
</gene>
<accession>O42296</accession>
<protein>
    <recommendedName>
        <fullName>Apolipoprotein A-I</fullName>
        <shortName>Apo-AI</shortName>
        <shortName>ApoA-I</shortName>
    </recommendedName>
    <alternativeName>
        <fullName>Apolipoprotein A1</fullName>
    </alternativeName>
    <component>
        <recommendedName>
            <fullName>Proapolipoprotein A-I</fullName>
            <shortName>ProapoA-I</shortName>
        </recommendedName>
    </component>
</protein>
<proteinExistence type="evidence at transcript level"/>
<name>APOA1_ANAPL</name>
<keyword id="KW-0153">Cholesterol metabolism</keyword>
<keyword id="KW-0345">HDL</keyword>
<keyword id="KW-0443">Lipid metabolism</keyword>
<keyword id="KW-0445">Lipid transport</keyword>
<keyword id="KW-0677">Repeat</keyword>
<keyword id="KW-0964">Secreted</keyword>
<keyword id="KW-0732">Signal</keyword>
<keyword id="KW-0753">Steroid metabolism</keyword>
<keyword id="KW-1207">Sterol metabolism</keyword>
<keyword id="KW-0813">Transport</keyword>
<organism>
    <name type="scientific">Anas platyrhynchos</name>
    <name type="common">Mallard</name>
    <name type="synonym">Anas boschas</name>
    <dbReference type="NCBI Taxonomy" id="8839"/>
    <lineage>
        <taxon>Eukaryota</taxon>
        <taxon>Metazoa</taxon>
        <taxon>Chordata</taxon>
        <taxon>Craniata</taxon>
        <taxon>Vertebrata</taxon>
        <taxon>Euteleostomi</taxon>
        <taxon>Archelosauria</taxon>
        <taxon>Archosauria</taxon>
        <taxon>Dinosauria</taxon>
        <taxon>Saurischia</taxon>
        <taxon>Theropoda</taxon>
        <taxon>Coelurosauria</taxon>
        <taxon>Aves</taxon>
        <taxon>Neognathae</taxon>
        <taxon>Galloanserae</taxon>
        <taxon>Anseriformes</taxon>
        <taxon>Anatidae</taxon>
        <taxon>Anatinae</taxon>
        <taxon>Anas</taxon>
    </lineage>
</organism>
<comment type="function">
    <text evidence="1">Participates in the reverse transport of cholesterol from tissues to the liver for excretion by promoting cholesterol efflux from tissues and by acting as a cofactor for the lecithin cholesterol acyltransferase (LCAT).</text>
</comment>
<comment type="subcellular location">
    <subcellularLocation>
        <location>Secreted</location>
    </subcellularLocation>
</comment>
<comment type="tissue specificity">
    <text>Major protein of plasma HDL, also found in chylomicrons.</text>
</comment>
<comment type="similarity">
    <text evidence="2">Belongs to the apolipoprotein A1/A4/E family.</text>
</comment>
<dbReference type="EMBL" id="U86131">
    <property type="protein sequence ID" value="AAB64381.1"/>
    <property type="molecule type" value="mRNA"/>
</dbReference>
<dbReference type="PIR" id="A61448">
    <property type="entry name" value="A61448"/>
</dbReference>
<dbReference type="SMR" id="O42296"/>
<dbReference type="Proteomes" id="UP000694400">
    <property type="component" value="Unplaced"/>
</dbReference>
<dbReference type="GO" id="GO:0042627">
    <property type="term" value="C:chylomicron"/>
    <property type="evidence" value="ECO:0007669"/>
    <property type="project" value="TreeGrafter"/>
</dbReference>
<dbReference type="GO" id="GO:1903561">
    <property type="term" value="C:extracellular vesicle"/>
    <property type="evidence" value="ECO:0007669"/>
    <property type="project" value="TreeGrafter"/>
</dbReference>
<dbReference type="GO" id="GO:0034364">
    <property type="term" value="C:high-density lipoprotein particle"/>
    <property type="evidence" value="ECO:0007669"/>
    <property type="project" value="UniProtKB-KW"/>
</dbReference>
<dbReference type="GO" id="GO:0034362">
    <property type="term" value="C:low-density lipoprotein particle"/>
    <property type="evidence" value="ECO:0007669"/>
    <property type="project" value="TreeGrafter"/>
</dbReference>
<dbReference type="GO" id="GO:0034361">
    <property type="term" value="C:very-low-density lipoprotein particle"/>
    <property type="evidence" value="ECO:0007669"/>
    <property type="project" value="TreeGrafter"/>
</dbReference>
<dbReference type="GO" id="GO:0120020">
    <property type="term" value="F:cholesterol transfer activity"/>
    <property type="evidence" value="ECO:0007669"/>
    <property type="project" value="TreeGrafter"/>
</dbReference>
<dbReference type="GO" id="GO:0060228">
    <property type="term" value="F:phosphatidylcholine-sterol O-acyltransferase activator activity"/>
    <property type="evidence" value="ECO:0007669"/>
    <property type="project" value="TreeGrafter"/>
</dbReference>
<dbReference type="GO" id="GO:0005543">
    <property type="term" value="F:phospholipid binding"/>
    <property type="evidence" value="ECO:0007669"/>
    <property type="project" value="TreeGrafter"/>
</dbReference>
<dbReference type="GO" id="GO:0055090">
    <property type="term" value="P:acylglycerol homeostasis"/>
    <property type="evidence" value="ECO:0007669"/>
    <property type="project" value="TreeGrafter"/>
</dbReference>
<dbReference type="GO" id="GO:0033344">
    <property type="term" value="P:cholesterol efflux"/>
    <property type="evidence" value="ECO:0007669"/>
    <property type="project" value="TreeGrafter"/>
</dbReference>
<dbReference type="GO" id="GO:0008203">
    <property type="term" value="P:cholesterol metabolic process"/>
    <property type="evidence" value="ECO:0007669"/>
    <property type="project" value="UniProtKB-KW"/>
</dbReference>
<dbReference type="GO" id="GO:0042157">
    <property type="term" value="P:lipoprotein metabolic process"/>
    <property type="evidence" value="ECO:0007669"/>
    <property type="project" value="InterPro"/>
</dbReference>
<dbReference type="GO" id="GO:0033700">
    <property type="term" value="P:phospholipid efflux"/>
    <property type="evidence" value="ECO:0007669"/>
    <property type="project" value="TreeGrafter"/>
</dbReference>
<dbReference type="FunFam" id="1.20.5.20:FF:000001">
    <property type="entry name" value="apolipoprotein A-I"/>
    <property type="match status" value="1"/>
</dbReference>
<dbReference type="FunFam" id="1.20.120.20:FF:000007">
    <property type="entry name" value="Apolipoprotein A-IV a"/>
    <property type="match status" value="1"/>
</dbReference>
<dbReference type="Gene3D" id="1.20.5.20">
    <property type="match status" value="1"/>
</dbReference>
<dbReference type="Gene3D" id="6.10.140.380">
    <property type="match status" value="1"/>
</dbReference>
<dbReference type="Gene3D" id="1.20.120.20">
    <property type="entry name" value="Apolipoprotein"/>
    <property type="match status" value="1"/>
</dbReference>
<dbReference type="InterPro" id="IPR000074">
    <property type="entry name" value="ApoA_E"/>
</dbReference>
<dbReference type="InterPro" id="IPR050163">
    <property type="entry name" value="Apolipoprotein_A1/A4/E"/>
</dbReference>
<dbReference type="PANTHER" id="PTHR18976">
    <property type="entry name" value="APOLIPOPROTEIN"/>
    <property type="match status" value="1"/>
</dbReference>
<dbReference type="PANTHER" id="PTHR18976:SF11">
    <property type="entry name" value="APOLIPOPROTEIN A-I"/>
    <property type="match status" value="1"/>
</dbReference>
<dbReference type="Pfam" id="PF01442">
    <property type="entry name" value="Apolipoprotein"/>
    <property type="match status" value="1"/>
</dbReference>
<dbReference type="SUPFAM" id="SSF58113">
    <property type="entry name" value="Apolipoprotein A-I"/>
    <property type="match status" value="1"/>
</dbReference>
<reference key="1">
    <citation type="submission" date="1997-01" db="EMBL/GenBank/DDBJ databases">
        <title>Cloning and sequencing of duck apolipoprotein AI cDNA.</title>
        <authorList>
            <person name="Chen B."/>
            <person name="Lu X."/>
            <person name="Wang K."/>
            <person name="Xue H."/>
            <person name="Zeng W."/>
            <person name="Zhu D."/>
            <person name="Chi L."/>
        </authorList>
    </citation>
    <scope>NUCLEOTIDE SEQUENCE [MRNA]</scope>
    <source>
        <strain>Pekin breed</strain>
        <tissue>Liver</tissue>
    </source>
</reference>
<feature type="signal peptide" evidence="1">
    <location>
        <begin position="1"/>
        <end position="18"/>
    </location>
</feature>
<feature type="chain" id="PRO_0000425340" description="Proapolipoprotein A-I">
    <location>
        <begin position="19"/>
        <end position="264"/>
    </location>
</feature>
<feature type="chain" id="PRO_0000001958" description="Apolipoprotein A-I">
    <location>
        <begin position="25"/>
        <end position="264"/>
    </location>
</feature>
<feature type="repeat" description="1">
    <location>
        <begin position="67"/>
        <end position="88"/>
    </location>
</feature>
<feature type="repeat" description="2">
    <location>
        <begin position="89"/>
        <end position="110"/>
    </location>
</feature>
<feature type="repeat" description="3; half-length">
    <location>
        <begin position="111"/>
        <end position="121"/>
    </location>
</feature>
<feature type="repeat" description="4">
    <location>
        <begin position="122"/>
        <end position="143"/>
    </location>
</feature>
<feature type="repeat" description="5">
    <location>
        <begin position="144"/>
        <end position="165"/>
    </location>
</feature>
<feature type="repeat" description="6">
    <location>
        <begin position="166"/>
        <end position="187"/>
    </location>
</feature>
<feature type="repeat" description="7">
    <location>
        <begin position="188"/>
        <end position="209"/>
    </location>
</feature>
<feature type="repeat" description="8">
    <location>
        <begin position="210"/>
        <end position="231"/>
    </location>
</feature>
<feature type="repeat" description="9; half-length">
    <location>
        <begin position="232"/>
        <end position="242"/>
    </location>
</feature>
<feature type="repeat" description="10">
    <location>
        <begin position="243"/>
        <end position="264"/>
    </location>
</feature>
<feature type="region of interest" description="10 X approximate tandem repeats">
    <location>
        <begin position="67"/>
        <end position="264"/>
    </location>
</feature>